<sequence>MLGAIARKTVENRILVSRHLISSTSCLFKDNNEELLESIKERIARNRRILQKHSSSHLKAREVNASISNLRQSMAAVQKKQKAAHEPPANSIVNIPSQVSIEVLGNGTGLLRACFILRTPLKTYMFNCPENACRFLWQLRIRSSSVVDLFITSANWDNIAGISSILLSKESNALSTRLHGAMNIKHFLECIRPFQDSDYGSCKYPSQVEERPYTMENYEDAGLKVTYIPLSPPLNIGSNNEKSKNVKVNNVDIAFLIEMKEAARRIDTMKLMELKVPKGPLIGKLKSGEAVTLPDGRTIQPDQVFSSDKVEGDKPLLLVTECTTEDHVKALIDSSSLQPFLNGEKQLDYMVHISDDAVINTPTYRHLMEKLNNPSITHLLINGGNPVIPAVESVYKHTRLLRSIAPSLFPALHPIDWSGIITQNEELSQRQDQFIRVAPMQRYWMRRGASFNEEPIVNNLLAAEPELSDKAKELIKEYQKLEKENKMDCEFPKLTFFGTSSAVPSKYRNVTGYLVEASENSAILIDVGEGTYGQMRAVFGEDGCKQLLVNLNCVLITHAHQDHMNGLYTIIARRKEAFESLGAPYRPLVLVCNRNVLKPMKTYSICFENIEHLLEIVDISRYPLTPPGSPGGPPGKRPRLPSPHLPPSRDVLQDMSSSFDKKAWKLDELKAVQVHHTRMANGFVMRVAGKRIVFSGDTKPCDLLVEEGKDADVLVHESTFEDGHEADAMRKRHSTMGQAVDVGKRMNAKHIILTHFSARYPKVPVLPEYLDKENIGVAMDMLRVRFDHLPLVSKLLPIFREVFVAELFELTIKKEQRVLKDKELSEKRGQLKA</sequence>
<accession>O44476</accession>
<accession>Q688B7</accession>
<gene>
    <name evidence="10" type="primary">hoe-1</name>
    <name evidence="10" type="ORF">E04A4.4</name>
</gene>
<organism>
    <name type="scientific">Caenorhabditis elegans</name>
    <dbReference type="NCBI Taxonomy" id="6239"/>
    <lineage>
        <taxon>Eukaryota</taxon>
        <taxon>Metazoa</taxon>
        <taxon>Ecdysozoa</taxon>
        <taxon>Nematoda</taxon>
        <taxon>Chromadorea</taxon>
        <taxon>Rhabditida</taxon>
        <taxon>Rhabditina</taxon>
        <taxon>Rhabditomorpha</taxon>
        <taxon>Rhabditoidea</taxon>
        <taxon>Rhabditidae</taxon>
        <taxon>Peloderinae</taxon>
        <taxon>Caenorhabditis</taxon>
    </lineage>
</organism>
<feature type="transit peptide" description="Mitochondrion" evidence="3">
    <location>
        <begin position="1"/>
        <end position="19"/>
    </location>
</feature>
<feature type="chain" id="PRO_0000155833" description="Zinc phosphodiesterase ELAC protein 2 homolog">
    <location>
        <begin position="20"/>
        <end position="833"/>
    </location>
</feature>
<feature type="region of interest" description="Disordered" evidence="4">
    <location>
        <begin position="624"/>
        <end position="652"/>
    </location>
</feature>
<feature type="compositionally biased region" description="Pro residues" evidence="4">
    <location>
        <begin position="624"/>
        <end position="646"/>
    </location>
</feature>
<feature type="splice variant" id="VSP_009390" description="In isoform b." evidence="7">
    <location>
        <begin position="1"/>
        <end position="73"/>
    </location>
</feature>
<feature type="mutagenesis site" description="Prevents localization to mitochondria. Does not affect nuclear localization. Does not affect the mitochondrial unfolded protein response." evidence="6">
    <original>M</original>
    <variation>A</variation>
    <location>
        <position position="1"/>
    </location>
</feature>
<feature type="mutagenesis site" description="Worms develop to adulthood as in wild-type. Defective nuclear localization. Reduces the mitochondrial unfolded protein response and under mitochondrial stress conditions, attenuates the transcription of genes which are up-regulated in the mitochondrial unfolded protein response such as hsp-6 and cyp-14A1.4." evidence="6">
    <original>KRPR</original>
    <variation>AAPA</variation>
    <location>
        <begin position="636"/>
        <end position="639"/>
    </location>
</feature>
<feature type="mutagenesis site" description="Does not develop past the L3 larval stage of development." evidence="6">
    <original>D</original>
    <variation>A</variation>
    <location>
        <position position="697"/>
    </location>
</feature>
<feature type="mutagenesis site" description="Sterile. Increases nuclear accumulation. Increases the mitochondrial unfolded protein response as indicated by increased expression of hsp-6, clec-47 and cyp-14A4.1. Increases the levels of transcription factors atfs-1 and dve-1 in the nucleus. Compromises mitochondrial membrane potential. Increases 3'-tRNA processing." evidence="6">
    <original>VAELFELTI</original>
    <variation>AAEAAEATA</variation>
    <location>
        <begin position="804"/>
        <end position="812"/>
    </location>
</feature>
<name>RNZ2_CAEEL</name>
<proteinExistence type="evidence at protein level"/>
<dbReference type="EC" id="3.1.26.11" evidence="9"/>
<dbReference type="EMBL" id="BX284604">
    <property type="protein sequence ID" value="CCD68705.1"/>
    <property type="molecule type" value="Genomic_DNA"/>
</dbReference>
<dbReference type="EMBL" id="BX284604">
    <property type="protein sequence ID" value="CCD68706.1"/>
    <property type="molecule type" value="Genomic_DNA"/>
</dbReference>
<dbReference type="PIR" id="T32608">
    <property type="entry name" value="T32608"/>
</dbReference>
<dbReference type="RefSeq" id="NP_001023109.1">
    <molecule id="O44476-1"/>
    <property type="nucleotide sequence ID" value="NM_001027938.4"/>
</dbReference>
<dbReference type="RefSeq" id="NP_001023110.1">
    <molecule id="O44476-2"/>
    <property type="nucleotide sequence ID" value="NM_001027939.2"/>
</dbReference>
<dbReference type="SMR" id="O44476"/>
<dbReference type="BioGRID" id="42370">
    <property type="interactions" value="7"/>
</dbReference>
<dbReference type="FunCoup" id="O44476">
    <property type="interactions" value="2541"/>
</dbReference>
<dbReference type="STRING" id="6239.E04A4.4a.1"/>
<dbReference type="iPTMnet" id="O44476"/>
<dbReference type="PaxDb" id="6239-E04A4.4a"/>
<dbReference type="PeptideAtlas" id="O44476"/>
<dbReference type="EnsemblMetazoa" id="E04A4.4a.1">
    <molecule id="O44476-1"/>
    <property type="protein sequence ID" value="E04A4.4a.1"/>
    <property type="gene ID" value="WBGene00001983"/>
</dbReference>
<dbReference type="EnsemblMetazoa" id="E04A4.4b.1">
    <molecule id="O44476-2"/>
    <property type="protein sequence ID" value="E04A4.4b.1"/>
    <property type="gene ID" value="WBGene00001983"/>
</dbReference>
<dbReference type="KEGG" id="cel:CELE_E04A4.4"/>
<dbReference type="UCSC" id="E04A4.4a">
    <molecule id="O44476-1"/>
    <property type="organism name" value="c. elegans"/>
</dbReference>
<dbReference type="AGR" id="WB:WBGene00001983"/>
<dbReference type="CTD" id="177241"/>
<dbReference type="WormBase" id="E04A4.4a">
    <molecule id="O44476-1"/>
    <property type="protein sequence ID" value="CE29748"/>
    <property type="gene ID" value="WBGene00001983"/>
    <property type="gene designation" value="hoe-1"/>
</dbReference>
<dbReference type="WormBase" id="E04A4.4b">
    <molecule id="O44476-2"/>
    <property type="protein sequence ID" value="CE36588"/>
    <property type="gene ID" value="WBGene00001983"/>
    <property type="gene designation" value="hoe-1"/>
</dbReference>
<dbReference type="eggNOG" id="KOG2121">
    <property type="taxonomic scope" value="Eukaryota"/>
</dbReference>
<dbReference type="InParanoid" id="O44476"/>
<dbReference type="OMA" id="INYICQL"/>
<dbReference type="OrthoDB" id="527344at2759"/>
<dbReference type="PhylomeDB" id="O44476"/>
<dbReference type="BRENDA" id="3.1.26.11">
    <property type="organism ID" value="1045"/>
</dbReference>
<dbReference type="PRO" id="PR:O44476"/>
<dbReference type="Proteomes" id="UP000001940">
    <property type="component" value="Chromosome IV"/>
</dbReference>
<dbReference type="Bgee" id="WBGene00001983">
    <property type="expression patterns" value="Expressed in germ line (C elegans) and 4 other cell types or tissues"/>
</dbReference>
<dbReference type="ExpressionAtlas" id="O44476">
    <property type="expression patterns" value="baseline and differential"/>
</dbReference>
<dbReference type="GO" id="GO:0005739">
    <property type="term" value="C:mitochondrion"/>
    <property type="evidence" value="ECO:0000318"/>
    <property type="project" value="GO_Central"/>
</dbReference>
<dbReference type="GO" id="GO:0005634">
    <property type="term" value="C:nucleus"/>
    <property type="evidence" value="ECO:0007669"/>
    <property type="project" value="UniProtKB-SubCell"/>
</dbReference>
<dbReference type="GO" id="GO:0042781">
    <property type="term" value="F:3'-tRNA processing endoribonuclease activity"/>
    <property type="evidence" value="ECO:0000318"/>
    <property type="project" value="GO_Central"/>
</dbReference>
<dbReference type="GO" id="GO:0046872">
    <property type="term" value="F:metal ion binding"/>
    <property type="evidence" value="ECO:0007669"/>
    <property type="project" value="UniProtKB-KW"/>
</dbReference>
<dbReference type="GO" id="GO:0007281">
    <property type="term" value="P:germ cell development"/>
    <property type="evidence" value="ECO:0000315"/>
    <property type="project" value="WormBase"/>
</dbReference>
<dbReference type="GO" id="GO:0051321">
    <property type="term" value="P:meiotic cell cycle"/>
    <property type="evidence" value="ECO:0000315"/>
    <property type="project" value="WormBase"/>
</dbReference>
<dbReference type="GO" id="GO:1990180">
    <property type="term" value="P:mitochondrial tRNA 3'-end processing"/>
    <property type="evidence" value="ECO:0000318"/>
    <property type="project" value="GO_Central"/>
</dbReference>
<dbReference type="GO" id="GO:0002119">
    <property type="term" value="P:nematode larval development"/>
    <property type="evidence" value="ECO:0000315"/>
    <property type="project" value="WormBase"/>
</dbReference>
<dbReference type="GO" id="GO:0040026">
    <property type="term" value="P:positive regulation of vulval development"/>
    <property type="evidence" value="ECO:0000316"/>
    <property type="project" value="WormBase"/>
</dbReference>
<dbReference type="CDD" id="cd07718">
    <property type="entry name" value="RNaseZ_ELAC1_ELAC2-C-term-like_MBL-fold"/>
    <property type="match status" value="1"/>
</dbReference>
<dbReference type="FunFam" id="3.60.15.10:FF:000086">
    <property type="entry name" value="Ribonuclease Z"/>
    <property type="match status" value="1"/>
</dbReference>
<dbReference type="FunFam" id="3.60.15.10:FF:000135">
    <property type="entry name" value="Ribonuclease Z"/>
    <property type="match status" value="1"/>
</dbReference>
<dbReference type="Gene3D" id="3.60.15.10">
    <property type="entry name" value="Ribonuclease Z/Hydroxyacylglutathione hydrolase-like"/>
    <property type="match status" value="2"/>
</dbReference>
<dbReference type="InterPro" id="IPR001279">
    <property type="entry name" value="Metallo-B-lactamas"/>
</dbReference>
<dbReference type="InterPro" id="IPR036866">
    <property type="entry name" value="RibonucZ/Hydroxyglut_hydro"/>
</dbReference>
<dbReference type="InterPro" id="IPR047151">
    <property type="entry name" value="RNZ2-like"/>
</dbReference>
<dbReference type="PANTHER" id="PTHR12553">
    <property type="entry name" value="ZINC PHOSPHODIESTERASE ELAC PROTEIN 2"/>
    <property type="match status" value="1"/>
</dbReference>
<dbReference type="PANTHER" id="PTHR12553:SF49">
    <property type="entry name" value="ZINC PHOSPHODIESTERASE ELAC PROTEIN 2"/>
    <property type="match status" value="1"/>
</dbReference>
<dbReference type="Pfam" id="PF12706">
    <property type="entry name" value="Lactamase_B_2"/>
    <property type="match status" value="1"/>
</dbReference>
<dbReference type="SMART" id="SM00849">
    <property type="entry name" value="Lactamase_B"/>
    <property type="match status" value="1"/>
</dbReference>
<dbReference type="SUPFAM" id="SSF56281">
    <property type="entry name" value="Metallo-hydrolase/oxidoreductase"/>
    <property type="match status" value="2"/>
</dbReference>
<comment type="function">
    <text evidence="2 5 6">Zinc phosphodiesterase, which displays some tRNA 3'-processing endonuclease activity (PubMed:35451962). Probably involved in tRNA maturation, by removing a 3'-trailer from precursor tRNA (By similarity). Involved in germline proliferation (PubMed:14729485). May be required for both mitosis and meiosis in germ cells (PubMed:14729485).</text>
</comment>
<comment type="function">
    <molecule>Isoform a</molecule>
    <text evidence="6">Does not regulate the mitochondrial unfolded protein response following mitochondrial stress.</text>
</comment>
<comment type="function">
    <molecule>Isoform b</molecule>
    <text evidence="6">Plays a role in mitochondrial unfolded protein response (PubMed:35451962). Upon mitochondrial stress is exported from the nucleus where its tRNA endonuclease activity is negatively regulated (PubMed:35451962). In response to mitochondrial stress, might be involved in activating a transcriptional response in an ATFS-1- and DVE-1-dependent manner (PubMed:35451962). May play a role in negatively regulating the mitochondrial membrane potential (PubMed:35451962).</text>
</comment>
<comment type="catalytic activity">
    <reaction evidence="9">
        <text>Endonucleolytic cleavage of RNA, removing extra 3' nucleotides from tRNA precursor, generating 3' termini of tRNAs. A 3'-hydroxy group is left at the tRNA terminus and a 5'-phosphoryl group is left at the trailer molecule.</text>
        <dbReference type="EC" id="3.1.26.11"/>
    </reaction>
</comment>
<comment type="cofactor">
    <cofactor evidence="8">
        <name>Zn(2+)</name>
        <dbReference type="ChEBI" id="CHEBI:29105"/>
    </cofactor>
</comment>
<comment type="subunit">
    <text evidence="1">Homodimer.</text>
</comment>
<comment type="subcellular location">
    <molecule>Isoform a</molecule>
    <subcellularLocation>
        <location evidence="6">Mitochondrion</location>
    </subcellularLocation>
</comment>
<comment type="subcellular location">
    <molecule>Isoform b</molecule>
    <subcellularLocation>
        <location evidence="6">Nucleus</location>
    </subcellularLocation>
    <text evidence="6">Accumulates in the nucleus upon mitochondrial stress.</text>
</comment>
<comment type="alternative products">
    <event type="alternative splicing"/>
    <isoform>
        <id>O44476-1</id>
        <name evidence="10">a</name>
        <sequence type="displayed"/>
    </isoform>
    <isoform>
        <id>O44476-2</id>
        <name evidence="11">b</name>
        <sequence type="described" ref="VSP_009390"/>
    </isoform>
</comment>
<comment type="tissue specificity">
    <text evidence="5">Highly expressed in the germline.</text>
</comment>
<comment type="induction">
    <text evidence="6">Up-regulated in response to mitochondrial stress.</text>
</comment>
<comment type="disruption phenotype">
    <text evidence="6">RNAi-mediated knockdown attenuates the mitochondrial unfolded protein response as indicated by reduced expression of hsp-6.</text>
</comment>
<comment type="similarity">
    <text evidence="8">Belongs to the RNase Z family.</text>
</comment>
<reference key="1">
    <citation type="journal article" date="2004" name="Dev. Biol.">
        <title>The Caenorhabditis elegans homolog of the putative prostate cancer susceptibility gene ELAC2, hoe-1, plays a role in germline proliferation.</title>
        <authorList>
            <person name="Smith M.M."/>
            <person name="Levitan D.J."/>
        </authorList>
    </citation>
    <scope>NUCLEOTIDE SEQUENCE [MRNA] (ISOFORMS A AND B)</scope>
    <scope>FUNCTION</scope>
    <scope>TISSUE SPECIFICITY</scope>
</reference>
<reference key="2">
    <citation type="journal article" date="1998" name="Science">
        <title>Genome sequence of the nematode C. elegans: a platform for investigating biology.</title>
        <authorList>
            <consortium name="The C. elegans sequencing consortium"/>
        </authorList>
    </citation>
    <scope>NUCLEOTIDE SEQUENCE [LARGE SCALE GENOMIC DNA]</scope>
    <source>
        <strain>Bristol N2</strain>
    </source>
</reference>
<reference key="3">
    <citation type="journal article" date="2022" name="Elife">
        <title>A tRNA processing enzyme is a key regulator of the mitochondrial unfolded protein response.</title>
        <authorList>
            <person name="Held J.P."/>
            <person name="Feng G."/>
            <person name="Saunders B.R."/>
            <person name="Pereira C.V."/>
            <person name="Burkewitz K."/>
            <person name="Patel M.R."/>
        </authorList>
    </citation>
    <scope>FUNCTION</scope>
    <scope>CATALYTIC ACTIVITY</scope>
    <scope>SUBCELLULAR LOCATION</scope>
    <scope>INDUCTION</scope>
    <scope>DISRUPTION PHENOTYPE</scope>
    <scope>MUTAGENESIS OF MET-1; 636-LYS--ARG-639; ASP-697 AND 804-VAL--ILE-812</scope>
</reference>
<keyword id="KW-0025">Alternative splicing</keyword>
<keyword id="KW-0255">Endonuclease</keyword>
<keyword id="KW-0378">Hydrolase</keyword>
<keyword id="KW-0479">Metal-binding</keyword>
<keyword id="KW-0496">Mitochondrion</keyword>
<keyword id="KW-0540">Nuclease</keyword>
<keyword id="KW-0539">Nucleus</keyword>
<keyword id="KW-1185">Reference proteome</keyword>
<keyword id="KW-0809">Transit peptide</keyword>
<keyword id="KW-0819">tRNA processing</keyword>
<keyword id="KW-0862">Zinc</keyword>
<protein>
    <recommendedName>
        <fullName evidence="8">Zinc phosphodiesterase ELAC protein 2 homolog</fullName>
        <ecNumber evidence="9">3.1.26.11</ecNumber>
    </recommendedName>
    <alternativeName>
        <fullName evidence="10">Homolog of ELAC2 protein</fullName>
    </alternativeName>
    <alternativeName>
        <fullName evidence="2">tRNA 3 endonuclease 2</fullName>
    </alternativeName>
    <alternativeName>
        <fullName evidence="2">tRNase Z 2</fullName>
    </alternativeName>
</protein>
<evidence type="ECO:0000250" key="1"/>
<evidence type="ECO:0000250" key="2">
    <source>
        <dbReference type="UniProtKB" id="Q9BQ52"/>
    </source>
</evidence>
<evidence type="ECO:0000255" key="3"/>
<evidence type="ECO:0000256" key="4">
    <source>
        <dbReference type="SAM" id="MobiDB-lite"/>
    </source>
</evidence>
<evidence type="ECO:0000269" key="5">
    <source>
    </source>
</evidence>
<evidence type="ECO:0000269" key="6">
    <source>
    </source>
</evidence>
<evidence type="ECO:0000303" key="7">
    <source>
    </source>
</evidence>
<evidence type="ECO:0000305" key="8"/>
<evidence type="ECO:0000305" key="9">
    <source>
    </source>
</evidence>
<evidence type="ECO:0000312" key="10">
    <source>
        <dbReference type="WormBase" id="E04A4.4a"/>
    </source>
</evidence>
<evidence type="ECO:0000312" key="11">
    <source>
        <dbReference type="WormBase" id="E04A4.4b"/>
    </source>
</evidence>